<gene>
    <name evidence="1" type="primary">der</name>
    <name type="synonym">engA</name>
    <name type="ordered locus">LA_1303</name>
</gene>
<name>DER_LEPIN</name>
<keyword id="KW-0342">GTP-binding</keyword>
<keyword id="KW-0547">Nucleotide-binding</keyword>
<keyword id="KW-1185">Reference proteome</keyword>
<keyword id="KW-0677">Repeat</keyword>
<keyword id="KW-0690">Ribosome biogenesis</keyword>
<reference key="1">
    <citation type="journal article" date="2003" name="Nature">
        <title>Unique physiological and pathogenic features of Leptospira interrogans revealed by whole-genome sequencing.</title>
        <authorList>
            <person name="Ren S.-X."/>
            <person name="Fu G."/>
            <person name="Jiang X.-G."/>
            <person name="Zeng R."/>
            <person name="Miao Y.-G."/>
            <person name="Xu H."/>
            <person name="Zhang Y.-X."/>
            <person name="Xiong H."/>
            <person name="Lu G."/>
            <person name="Lu L.-F."/>
            <person name="Jiang H.-Q."/>
            <person name="Jia J."/>
            <person name="Tu Y.-F."/>
            <person name="Jiang J.-X."/>
            <person name="Gu W.-Y."/>
            <person name="Zhang Y.-Q."/>
            <person name="Cai Z."/>
            <person name="Sheng H.-H."/>
            <person name="Yin H.-F."/>
            <person name="Zhang Y."/>
            <person name="Zhu G.-F."/>
            <person name="Wan M."/>
            <person name="Huang H.-L."/>
            <person name="Qian Z."/>
            <person name="Wang S.-Y."/>
            <person name="Ma W."/>
            <person name="Yao Z.-J."/>
            <person name="Shen Y."/>
            <person name="Qiang B.-Q."/>
            <person name="Xia Q.-C."/>
            <person name="Guo X.-K."/>
            <person name="Danchin A."/>
            <person name="Saint Girons I."/>
            <person name="Somerville R.L."/>
            <person name="Wen Y.-M."/>
            <person name="Shi M.-H."/>
            <person name="Chen Z."/>
            <person name="Xu J.-G."/>
            <person name="Zhao G.-P."/>
        </authorList>
    </citation>
    <scope>NUCLEOTIDE SEQUENCE [LARGE SCALE GENOMIC DNA]</scope>
    <source>
        <strain>56601</strain>
    </source>
</reference>
<sequence length="489" mass="55704">MAKAVKKEIAKSEEVVSIKAPRKEPGKKIPVVSIVGRQNVGKSTLFNSLLKKKLAITEDYPGVTRDVLSARIYQEEKDLDFYLCDTPGLDIENPDSLSQTILETAYRQLRESDVIVFLLDKNLITTADHGLLNYLRREDKVANKPIIYCVNKADKELDEFDLEEFYRMGLSEVLPISAIGRKNLGLLLEKIQFFLKDKPGKVWIEKISASKKKEAQPLPLAEEDYEFRLAIVGKPNSGKSSLLNAICGYERAVVSDVAGTTRDSIDTLLEFGDRRLLLTDTAGIRKQSKTAEALEFYSYQRTIKAIESSDLVIHLLDAKKGFGDFDKKITSLLQEKGKPFLLAVNKWDSIEDKTDKTFKEYKEKLYSRFPLLNEVPIITISATERLRVQKLMDLSFDLASRSHRKVSTSELNKNLKNWMGLAGRSFSAHQPPKMLYCTQVSTSPFHLILFVNHVEYFKSNLVSFLKKKLTETYDLQGIPIRLEFRSDRK</sequence>
<dbReference type="EMBL" id="AE010300">
    <property type="protein sequence ID" value="AAN48502.1"/>
    <property type="molecule type" value="Genomic_DNA"/>
</dbReference>
<dbReference type="RefSeq" id="NP_711484.1">
    <property type="nucleotide sequence ID" value="NC_004342.2"/>
</dbReference>
<dbReference type="RefSeq" id="WP_001029807.1">
    <property type="nucleotide sequence ID" value="NC_004342.2"/>
</dbReference>
<dbReference type="SMR" id="Q8F6K1"/>
<dbReference type="FunCoup" id="Q8F6K1">
    <property type="interactions" value="449"/>
</dbReference>
<dbReference type="STRING" id="189518.LA_1303"/>
<dbReference type="PaxDb" id="189518-LA_1303"/>
<dbReference type="EnsemblBacteria" id="AAN48502">
    <property type="protein sequence ID" value="AAN48502"/>
    <property type="gene ID" value="LA_1303"/>
</dbReference>
<dbReference type="KEGG" id="lil:LA_1303"/>
<dbReference type="PATRIC" id="fig|189518.3.peg.1301"/>
<dbReference type="HOGENOM" id="CLU_016077_6_2_12"/>
<dbReference type="InParanoid" id="Q8F6K1"/>
<dbReference type="OrthoDB" id="9805918at2"/>
<dbReference type="Proteomes" id="UP000001408">
    <property type="component" value="Chromosome I"/>
</dbReference>
<dbReference type="GO" id="GO:0005525">
    <property type="term" value="F:GTP binding"/>
    <property type="evidence" value="ECO:0007669"/>
    <property type="project" value="UniProtKB-UniRule"/>
</dbReference>
<dbReference type="GO" id="GO:0043022">
    <property type="term" value="F:ribosome binding"/>
    <property type="evidence" value="ECO:0000318"/>
    <property type="project" value="GO_Central"/>
</dbReference>
<dbReference type="GO" id="GO:0042254">
    <property type="term" value="P:ribosome biogenesis"/>
    <property type="evidence" value="ECO:0007669"/>
    <property type="project" value="UniProtKB-KW"/>
</dbReference>
<dbReference type="CDD" id="cd01894">
    <property type="entry name" value="EngA1"/>
    <property type="match status" value="1"/>
</dbReference>
<dbReference type="CDD" id="cd01895">
    <property type="entry name" value="EngA2"/>
    <property type="match status" value="1"/>
</dbReference>
<dbReference type="FunFam" id="3.40.50.300:FF:000040">
    <property type="entry name" value="GTPase Der"/>
    <property type="match status" value="1"/>
</dbReference>
<dbReference type="Gene3D" id="3.30.300.20">
    <property type="match status" value="1"/>
</dbReference>
<dbReference type="Gene3D" id="3.40.50.300">
    <property type="entry name" value="P-loop containing nucleotide triphosphate hydrolases"/>
    <property type="match status" value="2"/>
</dbReference>
<dbReference type="HAMAP" id="MF_00195">
    <property type="entry name" value="GTPase_Der"/>
    <property type="match status" value="1"/>
</dbReference>
<dbReference type="InterPro" id="IPR031166">
    <property type="entry name" value="G_ENGA"/>
</dbReference>
<dbReference type="InterPro" id="IPR006073">
    <property type="entry name" value="GTP-bd"/>
</dbReference>
<dbReference type="InterPro" id="IPR016484">
    <property type="entry name" value="GTPase_Der"/>
</dbReference>
<dbReference type="InterPro" id="IPR032859">
    <property type="entry name" value="KH_dom-like"/>
</dbReference>
<dbReference type="InterPro" id="IPR015946">
    <property type="entry name" value="KH_dom-like_a/b"/>
</dbReference>
<dbReference type="InterPro" id="IPR027417">
    <property type="entry name" value="P-loop_NTPase"/>
</dbReference>
<dbReference type="InterPro" id="IPR005225">
    <property type="entry name" value="Small_GTP-bd"/>
</dbReference>
<dbReference type="NCBIfam" id="TIGR03594">
    <property type="entry name" value="GTPase_EngA"/>
    <property type="match status" value="1"/>
</dbReference>
<dbReference type="NCBIfam" id="TIGR00231">
    <property type="entry name" value="small_GTP"/>
    <property type="match status" value="2"/>
</dbReference>
<dbReference type="PANTHER" id="PTHR43834">
    <property type="entry name" value="GTPASE DER"/>
    <property type="match status" value="1"/>
</dbReference>
<dbReference type="PANTHER" id="PTHR43834:SF6">
    <property type="entry name" value="GTPASE DER"/>
    <property type="match status" value="1"/>
</dbReference>
<dbReference type="Pfam" id="PF14714">
    <property type="entry name" value="KH_dom-like"/>
    <property type="match status" value="1"/>
</dbReference>
<dbReference type="Pfam" id="PF01926">
    <property type="entry name" value="MMR_HSR1"/>
    <property type="match status" value="2"/>
</dbReference>
<dbReference type="PIRSF" id="PIRSF006485">
    <property type="entry name" value="GTP-binding_EngA"/>
    <property type="match status" value="1"/>
</dbReference>
<dbReference type="PRINTS" id="PR00326">
    <property type="entry name" value="GTP1OBG"/>
</dbReference>
<dbReference type="SUPFAM" id="SSF52540">
    <property type="entry name" value="P-loop containing nucleoside triphosphate hydrolases"/>
    <property type="match status" value="2"/>
</dbReference>
<dbReference type="PROSITE" id="PS51712">
    <property type="entry name" value="G_ENGA"/>
    <property type="match status" value="2"/>
</dbReference>
<comment type="function">
    <text evidence="1">GTPase that plays an essential role in the late steps of ribosome biogenesis.</text>
</comment>
<comment type="subunit">
    <text evidence="1">Associates with the 50S ribosomal subunit.</text>
</comment>
<comment type="similarity">
    <text evidence="1">Belongs to the TRAFAC class TrmE-Era-EngA-EngB-Septin-like GTPase superfamily. EngA (Der) GTPase family.</text>
</comment>
<protein>
    <recommendedName>
        <fullName evidence="1">GTPase Der</fullName>
    </recommendedName>
    <alternativeName>
        <fullName evidence="1">GTP-binding protein EngA</fullName>
    </alternativeName>
</protein>
<evidence type="ECO:0000255" key="1">
    <source>
        <dbReference type="HAMAP-Rule" id="MF_00195"/>
    </source>
</evidence>
<organism>
    <name type="scientific">Leptospira interrogans serogroup Icterohaemorrhagiae serovar Lai (strain 56601)</name>
    <dbReference type="NCBI Taxonomy" id="189518"/>
    <lineage>
        <taxon>Bacteria</taxon>
        <taxon>Pseudomonadati</taxon>
        <taxon>Spirochaetota</taxon>
        <taxon>Spirochaetia</taxon>
        <taxon>Leptospirales</taxon>
        <taxon>Leptospiraceae</taxon>
        <taxon>Leptospira</taxon>
    </lineage>
</organism>
<accession>Q8F6K1</accession>
<proteinExistence type="inferred from homology"/>
<feature type="chain" id="PRO_0000179007" description="GTPase Der">
    <location>
        <begin position="1"/>
        <end position="489"/>
    </location>
</feature>
<feature type="domain" description="EngA-type G 1">
    <location>
        <begin position="30"/>
        <end position="199"/>
    </location>
</feature>
<feature type="domain" description="EngA-type G 2">
    <location>
        <begin position="227"/>
        <end position="403"/>
    </location>
</feature>
<feature type="domain" description="KH-like" evidence="1">
    <location>
        <begin position="404"/>
        <end position="488"/>
    </location>
</feature>
<feature type="binding site" evidence="1">
    <location>
        <begin position="36"/>
        <end position="43"/>
    </location>
    <ligand>
        <name>GTP</name>
        <dbReference type="ChEBI" id="CHEBI:37565"/>
        <label>1</label>
    </ligand>
</feature>
<feature type="binding site" evidence="1">
    <location>
        <begin position="85"/>
        <end position="89"/>
    </location>
    <ligand>
        <name>GTP</name>
        <dbReference type="ChEBI" id="CHEBI:37565"/>
        <label>1</label>
    </ligand>
</feature>
<feature type="binding site" evidence="1">
    <location>
        <begin position="151"/>
        <end position="154"/>
    </location>
    <ligand>
        <name>GTP</name>
        <dbReference type="ChEBI" id="CHEBI:37565"/>
        <label>1</label>
    </ligand>
</feature>
<feature type="binding site" evidence="1">
    <location>
        <begin position="233"/>
        <end position="240"/>
    </location>
    <ligand>
        <name>GTP</name>
        <dbReference type="ChEBI" id="CHEBI:37565"/>
        <label>2</label>
    </ligand>
</feature>
<feature type="binding site" evidence="1">
    <location>
        <begin position="280"/>
        <end position="284"/>
    </location>
    <ligand>
        <name>GTP</name>
        <dbReference type="ChEBI" id="CHEBI:37565"/>
        <label>2</label>
    </ligand>
</feature>
<feature type="binding site" evidence="1">
    <location>
        <begin position="345"/>
        <end position="348"/>
    </location>
    <ligand>
        <name>GTP</name>
        <dbReference type="ChEBI" id="CHEBI:37565"/>
        <label>2</label>
    </ligand>
</feature>